<accession>A7NN90</accession>
<organism>
    <name type="scientific">Roseiflexus castenholzii (strain DSM 13941 / HLO8)</name>
    <dbReference type="NCBI Taxonomy" id="383372"/>
    <lineage>
        <taxon>Bacteria</taxon>
        <taxon>Bacillati</taxon>
        <taxon>Chloroflexota</taxon>
        <taxon>Chloroflexia</taxon>
        <taxon>Chloroflexales</taxon>
        <taxon>Roseiflexineae</taxon>
        <taxon>Roseiflexaceae</taxon>
        <taxon>Roseiflexus</taxon>
    </lineage>
</organism>
<gene>
    <name evidence="1" type="primary">pyrG</name>
    <name type="ordered locus">Rcas_2963</name>
</gene>
<proteinExistence type="inferred from homology"/>
<comment type="function">
    <text evidence="1">Catalyzes the ATP-dependent amination of UTP to CTP with either L-glutamine or ammonia as the source of nitrogen. Regulates intracellular CTP levels through interactions with the four ribonucleotide triphosphates.</text>
</comment>
<comment type="catalytic activity">
    <reaction evidence="1">
        <text>UTP + L-glutamine + ATP + H2O = CTP + L-glutamate + ADP + phosphate + 2 H(+)</text>
        <dbReference type="Rhea" id="RHEA:26426"/>
        <dbReference type="ChEBI" id="CHEBI:15377"/>
        <dbReference type="ChEBI" id="CHEBI:15378"/>
        <dbReference type="ChEBI" id="CHEBI:29985"/>
        <dbReference type="ChEBI" id="CHEBI:30616"/>
        <dbReference type="ChEBI" id="CHEBI:37563"/>
        <dbReference type="ChEBI" id="CHEBI:43474"/>
        <dbReference type="ChEBI" id="CHEBI:46398"/>
        <dbReference type="ChEBI" id="CHEBI:58359"/>
        <dbReference type="ChEBI" id="CHEBI:456216"/>
        <dbReference type="EC" id="6.3.4.2"/>
    </reaction>
</comment>
<comment type="catalytic activity">
    <reaction evidence="1">
        <text>L-glutamine + H2O = L-glutamate + NH4(+)</text>
        <dbReference type="Rhea" id="RHEA:15889"/>
        <dbReference type="ChEBI" id="CHEBI:15377"/>
        <dbReference type="ChEBI" id="CHEBI:28938"/>
        <dbReference type="ChEBI" id="CHEBI:29985"/>
        <dbReference type="ChEBI" id="CHEBI:58359"/>
    </reaction>
</comment>
<comment type="catalytic activity">
    <reaction evidence="1">
        <text>UTP + NH4(+) + ATP = CTP + ADP + phosphate + 2 H(+)</text>
        <dbReference type="Rhea" id="RHEA:16597"/>
        <dbReference type="ChEBI" id="CHEBI:15378"/>
        <dbReference type="ChEBI" id="CHEBI:28938"/>
        <dbReference type="ChEBI" id="CHEBI:30616"/>
        <dbReference type="ChEBI" id="CHEBI:37563"/>
        <dbReference type="ChEBI" id="CHEBI:43474"/>
        <dbReference type="ChEBI" id="CHEBI:46398"/>
        <dbReference type="ChEBI" id="CHEBI:456216"/>
    </reaction>
</comment>
<comment type="activity regulation">
    <text evidence="1">Allosterically activated by GTP, when glutamine is the substrate; GTP has no effect on the reaction when ammonia is the substrate. The allosteric effector GTP functions by stabilizing the protein conformation that binds the tetrahedral intermediate(s) formed during glutamine hydrolysis. Inhibited by the product CTP, via allosteric rather than competitive inhibition.</text>
</comment>
<comment type="pathway">
    <text evidence="1">Pyrimidine metabolism; CTP biosynthesis via de novo pathway; CTP from UDP: step 2/2.</text>
</comment>
<comment type="subunit">
    <text evidence="1">Homotetramer.</text>
</comment>
<comment type="miscellaneous">
    <text evidence="1">CTPSs have evolved a hybrid strategy for distinguishing between UTP and CTP. The overlapping regions of the product feedback inhibitory and substrate sites recognize a common feature in both compounds, the triphosphate moiety. To differentiate isosteric substrate and product pyrimidine rings, an additional pocket far from the expected kinase/ligase catalytic site, specifically recognizes the cytosine and ribose portions of the product inhibitor.</text>
</comment>
<comment type="similarity">
    <text evidence="1">Belongs to the CTP synthase family.</text>
</comment>
<name>PYRG_ROSCS</name>
<feature type="chain" id="PRO_1000139553" description="CTP synthase">
    <location>
        <begin position="1"/>
        <end position="555"/>
    </location>
</feature>
<feature type="domain" description="Glutamine amidotransferase type-1" evidence="1">
    <location>
        <begin position="292"/>
        <end position="535"/>
    </location>
</feature>
<feature type="region of interest" description="Amidoligase domain" evidence="1">
    <location>
        <begin position="1"/>
        <end position="267"/>
    </location>
</feature>
<feature type="active site" description="Nucleophile; for glutamine hydrolysis" evidence="1">
    <location>
        <position position="381"/>
    </location>
</feature>
<feature type="active site" evidence="1">
    <location>
        <position position="508"/>
    </location>
</feature>
<feature type="active site" evidence="1">
    <location>
        <position position="510"/>
    </location>
</feature>
<feature type="binding site" evidence="1">
    <location>
        <position position="13"/>
    </location>
    <ligand>
        <name>CTP</name>
        <dbReference type="ChEBI" id="CHEBI:37563"/>
        <note>allosteric inhibitor</note>
    </ligand>
</feature>
<feature type="binding site" evidence="1">
    <location>
        <position position="13"/>
    </location>
    <ligand>
        <name>UTP</name>
        <dbReference type="ChEBI" id="CHEBI:46398"/>
    </ligand>
</feature>
<feature type="binding site" evidence="1">
    <location>
        <begin position="14"/>
        <end position="19"/>
    </location>
    <ligand>
        <name>ATP</name>
        <dbReference type="ChEBI" id="CHEBI:30616"/>
    </ligand>
</feature>
<feature type="binding site" evidence="1">
    <location>
        <position position="54"/>
    </location>
    <ligand>
        <name>L-glutamine</name>
        <dbReference type="ChEBI" id="CHEBI:58359"/>
    </ligand>
</feature>
<feature type="binding site" evidence="1">
    <location>
        <position position="71"/>
    </location>
    <ligand>
        <name>ATP</name>
        <dbReference type="ChEBI" id="CHEBI:30616"/>
    </ligand>
</feature>
<feature type="binding site" evidence="1">
    <location>
        <position position="71"/>
    </location>
    <ligand>
        <name>Mg(2+)</name>
        <dbReference type="ChEBI" id="CHEBI:18420"/>
    </ligand>
</feature>
<feature type="binding site" evidence="1">
    <location>
        <position position="141"/>
    </location>
    <ligand>
        <name>Mg(2+)</name>
        <dbReference type="ChEBI" id="CHEBI:18420"/>
    </ligand>
</feature>
<feature type="binding site" evidence="1">
    <location>
        <begin position="148"/>
        <end position="150"/>
    </location>
    <ligand>
        <name>CTP</name>
        <dbReference type="ChEBI" id="CHEBI:37563"/>
        <note>allosteric inhibitor</note>
    </ligand>
</feature>
<feature type="binding site" evidence="1">
    <location>
        <begin position="188"/>
        <end position="193"/>
    </location>
    <ligand>
        <name>CTP</name>
        <dbReference type="ChEBI" id="CHEBI:37563"/>
        <note>allosteric inhibitor</note>
    </ligand>
</feature>
<feature type="binding site" evidence="1">
    <location>
        <begin position="188"/>
        <end position="193"/>
    </location>
    <ligand>
        <name>UTP</name>
        <dbReference type="ChEBI" id="CHEBI:46398"/>
    </ligand>
</feature>
<feature type="binding site" evidence="1">
    <location>
        <position position="224"/>
    </location>
    <ligand>
        <name>CTP</name>
        <dbReference type="ChEBI" id="CHEBI:37563"/>
        <note>allosteric inhibitor</note>
    </ligand>
</feature>
<feature type="binding site" evidence="1">
    <location>
        <position position="224"/>
    </location>
    <ligand>
        <name>UTP</name>
        <dbReference type="ChEBI" id="CHEBI:46398"/>
    </ligand>
</feature>
<feature type="binding site" evidence="1">
    <location>
        <position position="354"/>
    </location>
    <ligand>
        <name>L-glutamine</name>
        <dbReference type="ChEBI" id="CHEBI:58359"/>
    </ligand>
</feature>
<feature type="binding site" evidence="1">
    <location>
        <begin position="382"/>
        <end position="385"/>
    </location>
    <ligand>
        <name>L-glutamine</name>
        <dbReference type="ChEBI" id="CHEBI:58359"/>
    </ligand>
</feature>
<feature type="binding site" evidence="1">
    <location>
        <position position="406"/>
    </location>
    <ligand>
        <name>L-glutamine</name>
        <dbReference type="ChEBI" id="CHEBI:58359"/>
    </ligand>
</feature>
<feature type="binding site" evidence="1">
    <location>
        <position position="463"/>
    </location>
    <ligand>
        <name>L-glutamine</name>
        <dbReference type="ChEBI" id="CHEBI:58359"/>
    </ligand>
</feature>
<dbReference type="EC" id="6.3.4.2" evidence="1"/>
<dbReference type="EMBL" id="CP000804">
    <property type="protein sequence ID" value="ABU59023.1"/>
    <property type="molecule type" value="Genomic_DNA"/>
</dbReference>
<dbReference type="RefSeq" id="WP_012121447.1">
    <property type="nucleotide sequence ID" value="NC_009767.1"/>
</dbReference>
<dbReference type="SMR" id="A7NN90"/>
<dbReference type="STRING" id="383372.Rcas_2963"/>
<dbReference type="KEGG" id="rca:Rcas_2963"/>
<dbReference type="eggNOG" id="COG0504">
    <property type="taxonomic scope" value="Bacteria"/>
</dbReference>
<dbReference type="HOGENOM" id="CLU_011675_5_0_0"/>
<dbReference type="OrthoDB" id="9801107at2"/>
<dbReference type="UniPathway" id="UPA00159">
    <property type="reaction ID" value="UER00277"/>
</dbReference>
<dbReference type="Proteomes" id="UP000000263">
    <property type="component" value="Chromosome"/>
</dbReference>
<dbReference type="GO" id="GO:0005829">
    <property type="term" value="C:cytosol"/>
    <property type="evidence" value="ECO:0007669"/>
    <property type="project" value="TreeGrafter"/>
</dbReference>
<dbReference type="GO" id="GO:0005524">
    <property type="term" value="F:ATP binding"/>
    <property type="evidence" value="ECO:0007669"/>
    <property type="project" value="UniProtKB-KW"/>
</dbReference>
<dbReference type="GO" id="GO:0003883">
    <property type="term" value="F:CTP synthase activity"/>
    <property type="evidence" value="ECO:0007669"/>
    <property type="project" value="UniProtKB-UniRule"/>
</dbReference>
<dbReference type="GO" id="GO:0004359">
    <property type="term" value="F:glutaminase activity"/>
    <property type="evidence" value="ECO:0007669"/>
    <property type="project" value="RHEA"/>
</dbReference>
<dbReference type="GO" id="GO:0042802">
    <property type="term" value="F:identical protein binding"/>
    <property type="evidence" value="ECO:0007669"/>
    <property type="project" value="TreeGrafter"/>
</dbReference>
<dbReference type="GO" id="GO:0046872">
    <property type="term" value="F:metal ion binding"/>
    <property type="evidence" value="ECO:0007669"/>
    <property type="project" value="UniProtKB-KW"/>
</dbReference>
<dbReference type="GO" id="GO:0044210">
    <property type="term" value="P:'de novo' CTP biosynthetic process"/>
    <property type="evidence" value="ECO:0007669"/>
    <property type="project" value="UniProtKB-UniRule"/>
</dbReference>
<dbReference type="GO" id="GO:0019856">
    <property type="term" value="P:pyrimidine nucleobase biosynthetic process"/>
    <property type="evidence" value="ECO:0007669"/>
    <property type="project" value="TreeGrafter"/>
</dbReference>
<dbReference type="CDD" id="cd03113">
    <property type="entry name" value="CTPS_N"/>
    <property type="match status" value="1"/>
</dbReference>
<dbReference type="CDD" id="cd01746">
    <property type="entry name" value="GATase1_CTP_Synthase"/>
    <property type="match status" value="1"/>
</dbReference>
<dbReference type="FunFam" id="3.40.50.300:FF:000009">
    <property type="entry name" value="CTP synthase"/>
    <property type="match status" value="1"/>
</dbReference>
<dbReference type="FunFam" id="3.40.50.880:FF:000002">
    <property type="entry name" value="CTP synthase"/>
    <property type="match status" value="1"/>
</dbReference>
<dbReference type="Gene3D" id="3.40.50.880">
    <property type="match status" value="1"/>
</dbReference>
<dbReference type="Gene3D" id="3.40.50.300">
    <property type="entry name" value="P-loop containing nucleotide triphosphate hydrolases"/>
    <property type="match status" value="1"/>
</dbReference>
<dbReference type="HAMAP" id="MF_01227">
    <property type="entry name" value="PyrG"/>
    <property type="match status" value="1"/>
</dbReference>
<dbReference type="InterPro" id="IPR029062">
    <property type="entry name" value="Class_I_gatase-like"/>
</dbReference>
<dbReference type="InterPro" id="IPR004468">
    <property type="entry name" value="CTP_synthase"/>
</dbReference>
<dbReference type="InterPro" id="IPR017456">
    <property type="entry name" value="CTP_synthase_N"/>
</dbReference>
<dbReference type="InterPro" id="IPR017926">
    <property type="entry name" value="GATASE"/>
</dbReference>
<dbReference type="InterPro" id="IPR033828">
    <property type="entry name" value="GATase1_CTP_Synthase"/>
</dbReference>
<dbReference type="InterPro" id="IPR027417">
    <property type="entry name" value="P-loop_NTPase"/>
</dbReference>
<dbReference type="NCBIfam" id="NF003792">
    <property type="entry name" value="PRK05380.1"/>
    <property type="match status" value="1"/>
</dbReference>
<dbReference type="NCBIfam" id="TIGR00337">
    <property type="entry name" value="PyrG"/>
    <property type="match status" value="1"/>
</dbReference>
<dbReference type="PANTHER" id="PTHR11550">
    <property type="entry name" value="CTP SYNTHASE"/>
    <property type="match status" value="1"/>
</dbReference>
<dbReference type="PANTHER" id="PTHR11550:SF0">
    <property type="entry name" value="CTP SYNTHASE-RELATED"/>
    <property type="match status" value="1"/>
</dbReference>
<dbReference type="Pfam" id="PF06418">
    <property type="entry name" value="CTP_synth_N"/>
    <property type="match status" value="1"/>
</dbReference>
<dbReference type="Pfam" id="PF00117">
    <property type="entry name" value="GATase"/>
    <property type="match status" value="1"/>
</dbReference>
<dbReference type="SUPFAM" id="SSF52317">
    <property type="entry name" value="Class I glutamine amidotransferase-like"/>
    <property type="match status" value="1"/>
</dbReference>
<dbReference type="SUPFAM" id="SSF52540">
    <property type="entry name" value="P-loop containing nucleoside triphosphate hydrolases"/>
    <property type="match status" value="1"/>
</dbReference>
<dbReference type="PROSITE" id="PS51273">
    <property type="entry name" value="GATASE_TYPE_1"/>
    <property type="match status" value="1"/>
</dbReference>
<evidence type="ECO:0000255" key="1">
    <source>
        <dbReference type="HAMAP-Rule" id="MF_01227"/>
    </source>
</evidence>
<protein>
    <recommendedName>
        <fullName evidence="1">CTP synthase</fullName>
        <ecNumber evidence="1">6.3.4.2</ecNumber>
    </recommendedName>
    <alternativeName>
        <fullName evidence="1">Cytidine 5'-triphosphate synthase</fullName>
    </alternativeName>
    <alternativeName>
        <fullName evidence="1">Cytidine triphosphate synthetase</fullName>
        <shortName evidence="1">CTP synthetase</shortName>
        <shortName evidence="1">CTPS</shortName>
    </alternativeName>
    <alternativeName>
        <fullName evidence="1">UTP--ammonia ligase</fullName>
    </alternativeName>
</protein>
<reference key="1">
    <citation type="submission" date="2007-08" db="EMBL/GenBank/DDBJ databases">
        <title>Complete sequence of Roseiflexus castenholzii DSM 13941.</title>
        <authorList>
            <consortium name="US DOE Joint Genome Institute"/>
            <person name="Copeland A."/>
            <person name="Lucas S."/>
            <person name="Lapidus A."/>
            <person name="Barry K."/>
            <person name="Glavina del Rio T."/>
            <person name="Dalin E."/>
            <person name="Tice H."/>
            <person name="Pitluck S."/>
            <person name="Thompson L.S."/>
            <person name="Brettin T."/>
            <person name="Bruce D."/>
            <person name="Detter J.C."/>
            <person name="Han C."/>
            <person name="Tapia R."/>
            <person name="Schmutz J."/>
            <person name="Larimer F."/>
            <person name="Land M."/>
            <person name="Hauser L."/>
            <person name="Kyrpides N."/>
            <person name="Mikhailova N."/>
            <person name="Bryant D.A."/>
            <person name="Hanada S."/>
            <person name="Tsukatani Y."/>
            <person name="Richardson P."/>
        </authorList>
    </citation>
    <scope>NUCLEOTIDE SEQUENCE [LARGE SCALE GENOMIC DNA]</scope>
    <source>
        <strain>DSM 13941 / HLO8</strain>
    </source>
</reference>
<sequence>MAKYIFVTGGVASSVGKGITVASIGRLLKARGVRVSVQKLDPYINVDPGTMSPYQHGEVFVTEDGAETDLDLGHYERFIDVNLTRLSNVTTGQIYSAVIQKERRGDYLGGTIQVIPHITNEIKARIAAVARQTGAEVVIVEIGGTVGDIEGLPFLEAIRQMRKDVGRDNVLYIHVTLLPHIGATGEVKTKPTQHSVMELRRVGITADVIVCRSDYPIADEIRDKIALFADVDVEAVVPLHTVESIYEVPLVLEEAGLGNYLTLRLGLGVREPNLDDWRDLVARIKAPKRKLAIALVGKYVELHDAYISVVEALRHAGLHQGVDVDIRWISSEQIEEEGCEPLLRDVYGIVVPGGFGDRGIEGKIAAAGYAREHGVPYLGLCLGMQVATISFARHVIGAESRANSTEFDLHTPHPVIDFMPDQLDITDKGGTMRLGGYPCRLLPGTRAHAAYGVDQVVERHRHRFEFNNKYRRLLESAGLVVSGQSPDGRLVEIIELRDHPWYVGVQFHPEFRSRPERPHPLFRDFIAAAAQTFREGDQRPLPLEQNGTVGAAVKA</sequence>
<keyword id="KW-0067">ATP-binding</keyword>
<keyword id="KW-0315">Glutamine amidotransferase</keyword>
<keyword id="KW-0436">Ligase</keyword>
<keyword id="KW-0460">Magnesium</keyword>
<keyword id="KW-0479">Metal-binding</keyword>
<keyword id="KW-0547">Nucleotide-binding</keyword>
<keyword id="KW-0665">Pyrimidine biosynthesis</keyword>
<keyword id="KW-1185">Reference proteome</keyword>